<keyword id="KW-1003">Cell membrane</keyword>
<keyword id="KW-0472">Membrane</keyword>
<keyword id="KW-0812">Transmembrane</keyword>
<keyword id="KW-1133">Transmembrane helix</keyword>
<organism>
    <name type="scientific">Clostridium perfringens (strain SM101 / Type A)</name>
    <dbReference type="NCBI Taxonomy" id="289380"/>
    <lineage>
        <taxon>Bacteria</taxon>
        <taxon>Bacillati</taxon>
        <taxon>Bacillota</taxon>
        <taxon>Clostridia</taxon>
        <taxon>Eubacteriales</taxon>
        <taxon>Clostridiaceae</taxon>
        <taxon>Clostridium</taxon>
    </lineage>
</organism>
<feature type="chain" id="PRO_0000291276" description="UPF0182 protein CPR_0011">
    <location>
        <begin position="1"/>
        <end position="918"/>
    </location>
</feature>
<feature type="transmembrane region" description="Helical" evidence="1">
    <location>
        <begin position="8"/>
        <end position="28"/>
    </location>
</feature>
<feature type="transmembrane region" description="Helical" evidence="1">
    <location>
        <begin position="46"/>
        <end position="66"/>
    </location>
</feature>
<feature type="transmembrane region" description="Helical" evidence="1">
    <location>
        <begin position="91"/>
        <end position="111"/>
    </location>
</feature>
<feature type="transmembrane region" description="Helical" evidence="1">
    <location>
        <begin position="151"/>
        <end position="171"/>
    </location>
</feature>
<feature type="transmembrane region" description="Helical" evidence="1">
    <location>
        <begin position="200"/>
        <end position="220"/>
    </location>
</feature>
<feature type="transmembrane region" description="Helical" evidence="1">
    <location>
        <begin position="243"/>
        <end position="263"/>
    </location>
</feature>
<feature type="transmembrane region" description="Helical" evidence="1">
    <location>
        <begin position="271"/>
        <end position="291"/>
    </location>
</feature>
<sequence>MKNKILNTVLISILLLVVVFFVSTNFIINVQWFKEVGYLNVFFTKLIAICKLFVPIFILYFCVIAIYLFTLRKSIRSLVGDTKFKSVKKYFLLSNLVISILGAGATATTQWYKILQFTNAVPFGEVDPIFNKDISFYVFKLPLVQSLFSTAISLIIILVLITVIIYLALGFKDKIYQNKDNVININSKTYGIRKFAGKQLAVLASVLSLLIGCSYLLKSYNLVYSTRGVSYGAGYTDVKITMIFYKVIAIACVISSIVVFISILKLKFRPIIISIASIAVLIVLEPVVAIFTQQFVVKPNEMELEKPYISYSIDATKKAFNIDEIEVKEMEPNENITSEKLEDNKDIIENLKVNSTGPLLSFYQQVQLIKNYYEFNDADTDRYNINGKYTQVFVSPREINREAMTTWQNKHLRYTHGYGLAMSRVNSVTEFGQPDFVMKDIPTVNTTDINLENPRIYFGESDNDYVIVNTEGGEFDYPTGDTENTFNYNGTGGLKMTPFNRVLFSIYERNPKILMSSSITSESRIILNRNIVKRVQEIAPFLTYDSDPYIVVHDGRLVWMMNAYTSTDKYPFSEPHEGVNYIRNSVKVVVDAFNGNVDFYVTDENDPIINCYLKIYKGLFKPLSEMPEDLKEHFRYPQDLFELQSKVLTKYHVDDPIKLFTEEDLWDRSLDVVKHGGENLSQGDEGKEESILNKAKENKNNEAENEGLYLMTKLPDEENVEMMLLDYFNMRGKQSMVALLGARMDGDNYGELVMYKFPPQRTIYSPILFKNRIQQDPNISKEISLWAGKGSEVIYGDIIIVPIEDSLLYLNTIYLKANSENSMPEMKRVILSNGDKIVIEENIEKALLKLFNYNSFEENKNSNKDETSNTEITSDNSGVKEAADLFNKAIEAQKNGDWATYGEFINKLGDVLNKMSHD</sequence>
<proteinExistence type="inferred from homology"/>
<name>Y011_CLOPS</name>
<evidence type="ECO:0000255" key="1">
    <source>
        <dbReference type="HAMAP-Rule" id="MF_01600"/>
    </source>
</evidence>
<dbReference type="EMBL" id="CP000312">
    <property type="protein sequence ID" value="ABG86032.1"/>
    <property type="molecule type" value="Genomic_DNA"/>
</dbReference>
<dbReference type="RefSeq" id="WP_011591200.1">
    <property type="nucleotide sequence ID" value="NC_008262.1"/>
</dbReference>
<dbReference type="SMR" id="Q0SWX2"/>
<dbReference type="KEGG" id="cpr:CPR_0011"/>
<dbReference type="BioCyc" id="CPER289380:GI76-14-MONOMER"/>
<dbReference type="Proteomes" id="UP000001824">
    <property type="component" value="Chromosome"/>
</dbReference>
<dbReference type="GO" id="GO:0005576">
    <property type="term" value="C:extracellular region"/>
    <property type="evidence" value="ECO:0007669"/>
    <property type="project" value="TreeGrafter"/>
</dbReference>
<dbReference type="GO" id="GO:0005886">
    <property type="term" value="C:plasma membrane"/>
    <property type="evidence" value="ECO:0007669"/>
    <property type="project" value="UniProtKB-SubCell"/>
</dbReference>
<dbReference type="HAMAP" id="MF_01600">
    <property type="entry name" value="UPF0182"/>
    <property type="match status" value="1"/>
</dbReference>
<dbReference type="InterPro" id="IPR005372">
    <property type="entry name" value="UPF0182"/>
</dbReference>
<dbReference type="NCBIfam" id="NF000825">
    <property type="entry name" value="PRK00068.1"/>
    <property type="match status" value="1"/>
</dbReference>
<dbReference type="PANTHER" id="PTHR39344">
    <property type="entry name" value="UPF0182 PROTEIN SLL1060"/>
    <property type="match status" value="1"/>
</dbReference>
<dbReference type="PANTHER" id="PTHR39344:SF1">
    <property type="entry name" value="UPF0182 PROTEIN SLL1060"/>
    <property type="match status" value="1"/>
</dbReference>
<dbReference type="Pfam" id="PF03699">
    <property type="entry name" value="UPF0182"/>
    <property type="match status" value="1"/>
</dbReference>
<accession>Q0SWX2</accession>
<reference key="1">
    <citation type="journal article" date="2006" name="Genome Res.">
        <title>Skewed genomic variability in strains of the toxigenic bacterial pathogen, Clostridium perfringens.</title>
        <authorList>
            <person name="Myers G.S.A."/>
            <person name="Rasko D.A."/>
            <person name="Cheung J.K."/>
            <person name="Ravel J."/>
            <person name="Seshadri R."/>
            <person name="DeBoy R.T."/>
            <person name="Ren Q."/>
            <person name="Varga J."/>
            <person name="Awad M.M."/>
            <person name="Brinkac L.M."/>
            <person name="Daugherty S.C."/>
            <person name="Haft D.H."/>
            <person name="Dodson R.J."/>
            <person name="Madupu R."/>
            <person name="Nelson W.C."/>
            <person name="Rosovitz M.J."/>
            <person name="Sullivan S.A."/>
            <person name="Khouri H."/>
            <person name="Dimitrov G.I."/>
            <person name="Watkins K.L."/>
            <person name="Mulligan S."/>
            <person name="Benton J."/>
            <person name="Radune D."/>
            <person name="Fisher D.J."/>
            <person name="Atkins H.S."/>
            <person name="Hiscox T."/>
            <person name="Jost B.H."/>
            <person name="Billington S.J."/>
            <person name="Songer J.G."/>
            <person name="McClane B.A."/>
            <person name="Titball R.W."/>
            <person name="Rood J.I."/>
            <person name="Melville S.B."/>
            <person name="Paulsen I.T."/>
        </authorList>
    </citation>
    <scope>NUCLEOTIDE SEQUENCE [LARGE SCALE GENOMIC DNA]</scope>
    <source>
        <strain>SM101 / Type A</strain>
    </source>
</reference>
<protein>
    <recommendedName>
        <fullName evidence="1">UPF0182 protein CPR_0011</fullName>
    </recommendedName>
</protein>
<gene>
    <name type="ordered locus">CPR_0011</name>
</gene>
<comment type="subcellular location">
    <subcellularLocation>
        <location evidence="1">Cell membrane</location>
        <topology evidence="1">Multi-pass membrane protein</topology>
    </subcellularLocation>
</comment>
<comment type="similarity">
    <text evidence="1">Belongs to the UPF0182 family.</text>
</comment>